<gene>
    <name type="primary">MT-CYB</name>
    <name type="synonym">COB</name>
    <name type="synonym">CYTB</name>
    <name type="synonym">MTCYB</name>
</gene>
<accession>Q9XNM1</accession>
<feature type="chain" id="PRO_0000255034" description="Cytochrome b">
    <location>
        <begin position="1"/>
        <end position="380"/>
    </location>
</feature>
<feature type="transmembrane region" description="Helical" evidence="2">
    <location>
        <begin position="33"/>
        <end position="53"/>
    </location>
</feature>
<feature type="transmembrane region" description="Helical" evidence="2">
    <location>
        <begin position="77"/>
        <end position="98"/>
    </location>
</feature>
<feature type="transmembrane region" description="Helical" evidence="2">
    <location>
        <begin position="113"/>
        <end position="133"/>
    </location>
</feature>
<feature type="transmembrane region" description="Helical" evidence="2">
    <location>
        <begin position="178"/>
        <end position="198"/>
    </location>
</feature>
<feature type="transmembrane region" description="Helical" evidence="2">
    <location>
        <begin position="226"/>
        <end position="246"/>
    </location>
</feature>
<feature type="transmembrane region" description="Helical" evidence="2">
    <location>
        <begin position="288"/>
        <end position="308"/>
    </location>
</feature>
<feature type="transmembrane region" description="Helical" evidence="2">
    <location>
        <begin position="320"/>
        <end position="340"/>
    </location>
</feature>
<feature type="transmembrane region" description="Helical" evidence="2">
    <location>
        <begin position="347"/>
        <end position="367"/>
    </location>
</feature>
<feature type="binding site" description="axial binding residue" evidence="2">
    <location>
        <position position="83"/>
    </location>
    <ligand>
        <name>heme b</name>
        <dbReference type="ChEBI" id="CHEBI:60344"/>
        <label>b562</label>
    </ligand>
    <ligandPart>
        <name>Fe</name>
        <dbReference type="ChEBI" id="CHEBI:18248"/>
    </ligandPart>
</feature>
<feature type="binding site" description="axial binding residue" evidence="2">
    <location>
        <position position="97"/>
    </location>
    <ligand>
        <name>heme b</name>
        <dbReference type="ChEBI" id="CHEBI:60344"/>
        <label>b566</label>
    </ligand>
    <ligandPart>
        <name>Fe</name>
        <dbReference type="ChEBI" id="CHEBI:18248"/>
    </ligandPart>
</feature>
<feature type="binding site" description="axial binding residue" evidence="2">
    <location>
        <position position="182"/>
    </location>
    <ligand>
        <name>heme b</name>
        <dbReference type="ChEBI" id="CHEBI:60344"/>
        <label>b562</label>
    </ligand>
    <ligandPart>
        <name>Fe</name>
        <dbReference type="ChEBI" id="CHEBI:18248"/>
    </ligandPart>
</feature>
<feature type="binding site" description="axial binding residue" evidence="2">
    <location>
        <position position="196"/>
    </location>
    <ligand>
        <name>heme b</name>
        <dbReference type="ChEBI" id="CHEBI:60344"/>
        <label>b566</label>
    </ligand>
    <ligandPart>
        <name>Fe</name>
        <dbReference type="ChEBI" id="CHEBI:18248"/>
    </ligandPart>
</feature>
<feature type="binding site" evidence="2">
    <location>
        <position position="201"/>
    </location>
    <ligand>
        <name>a ubiquinone</name>
        <dbReference type="ChEBI" id="CHEBI:16389"/>
    </ligand>
</feature>
<keyword id="KW-0249">Electron transport</keyword>
<keyword id="KW-0349">Heme</keyword>
<keyword id="KW-0408">Iron</keyword>
<keyword id="KW-0472">Membrane</keyword>
<keyword id="KW-0479">Metal-binding</keyword>
<keyword id="KW-0496">Mitochondrion</keyword>
<keyword id="KW-0999">Mitochondrion inner membrane</keyword>
<keyword id="KW-0679">Respiratory chain</keyword>
<keyword id="KW-0812">Transmembrane</keyword>
<keyword id="KW-1133">Transmembrane helix</keyword>
<keyword id="KW-0813">Transport</keyword>
<keyword id="KW-0830">Ubiquinone</keyword>
<protein>
    <recommendedName>
        <fullName>Cytochrome b</fullName>
    </recommendedName>
    <alternativeName>
        <fullName>Complex III subunit 3</fullName>
    </alternativeName>
    <alternativeName>
        <fullName>Complex III subunit III</fullName>
    </alternativeName>
    <alternativeName>
        <fullName>Cytochrome b-c1 complex subunit 3</fullName>
    </alternativeName>
    <alternativeName>
        <fullName>Ubiquinol-cytochrome-c reductase complex cytochrome b subunit</fullName>
    </alternativeName>
</protein>
<dbReference type="EMBL" id="AF119275">
    <property type="protein sequence ID" value="AAD43893.1"/>
    <property type="molecule type" value="Genomic_DNA"/>
</dbReference>
<dbReference type="SMR" id="Q9XNM1"/>
<dbReference type="GO" id="GO:0005743">
    <property type="term" value="C:mitochondrial inner membrane"/>
    <property type="evidence" value="ECO:0007669"/>
    <property type="project" value="UniProtKB-SubCell"/>
</dbReference>
<dbReference type="GO" id="GO:0045275">
    <property type="term" value="C:respiratory chain complex III"/>
    <property type="evidence" value="ECO:0007669"/>
    <property type="project" value="InterPro"/>
</dbReference>
<dbReference type="GO" id="GO:0046872">
    <property type="term" value="F:metal ion binding"/>
    <property type="evidence" value="ECO:0007669"/>
    <property type="project" value="UniProtKB-KW"/>
</dbReference>
<dbReference type="GO" id="GO:0008121">
    <property type="term" value="F:ubiquinol-cytochrome-c reductase activity"/>
    <property type="evidence" value="ECO:0007669"/>
    <property type="project" value="InterPro"/>
</dbReference>
<dbReference type="GO" id="GO:0006122">
    <property type="term" value="P:mitochondrial electron transport, ubiquinol to cytochrome c"/>
    <property type="evidence" value="ECO:0007669"/>
    <property type="project" value="TreeGrafter"/>
</dbReference>
<dbReference type="CDD" id="cd00290">
    <property type="entry name" value="cytochrome_b_C"/>
    <property type="match status" value="1"/>
</dbReference>
<dbReference type="CDD" id="cd00284">
    <property type="entry name" value="Cytochrome_b_N"/>
    <property type="match status" value="1"/>
</dbReference>
<dbReference type="FunFam" id="1.20.810.10:FF:000002">
    <property type="entry name" value="Cytochrome b"/>
    <property type="match status" value="1"/>
</dbReference>
<dbReference type="Gene3D" id="1.20.810.10">
    <property type="entry name" value="Cytochrome Bc1 Complex, Chain C"/>
    <property type="match status" value="1"/>
</dbReference>
<dbReference type="InterPro" id="IPR005798">
    <property type="entry name" value="Cyt_b/b6_C"/>
</dbReference>
<dbReference type="InterPro" id="IPR036150">
    <property type="entry name" value="Cyt_b/b6_C_sf"/>
</dbReference>
<dbReference type="InterPro" id="IPR005797">
    <property type="entry name" value="Cyt_b/b6_N"/>
</dbReference>
<dbReference type="InterPro" id="IPR027387">
    <property type="entry name" value="Cytb/b6-like_sf"/>
</dbReference>
<dbReference type="InterPro" id="IPR030689">
    <property type="entry name" value="Cytochrome_b"/>
</dbReference>
<dbReference type="InterPro" id="IPR048260">
    <property type="entry name" value="Cytochrome_b_C_euk/bac"/>
</dbReference>
<dbReference type="InterPro" id="IPR048259">
    <property type="entry name" value="Cytochrome_b_N_euk/bac"/>
</dbReference>
<dbReference type="InterPro" id="IPR016174">
    <property type="entry name" value="Di-haem_cyt_TM"/>
</dbReference>
<dbReference type="PANTHER" id="PTHR19271">
    <property type="entry name" value="CYTOCHROME B"/>
    <property type="match status" value="1"/>
</dbReference>
<dbReference type="PANTHER" id="PTHR19271:SF16">
    <property type="entry name" value="CYTOCHROME B"/>
    <property type="match status" value="1"/>
</dbReference>
<dbReference type="Pfam" id="PF00032">
    <property type="entry name" value="Cytochrom_B_C"/>
    <property type="match status" value="1"/>
</dbReference>
<dbReference type="Pfam" id="PF00033">
    <property type="entry name" value="Cytochrome_B"/>
    <property type="match status" value="1"/>
</dbReference>
<dbReference type="PIRSF" id="PIRSF038885">
    <property type="entry name" value="COB"/>
    <property type="match status" value="1"/>
</dbReference>
<dbReference type="SUPFAM" id="SSF81648">
    <property type="entry name" value="a domain/subunit of cytochrome bc1 complex (Ubiquinol-cytochrome c reductase)"/>
    <property type="match status" value="1"/>
</dbReference>
<dbReference type="SUPFAM" id="SSF81342">
    <property type="entry name" value="Transmembrane di-heme cytochromes"/>
    <property type="match status" value="1"/>
</dbReference>
<dbReference type="PROSITE" id="PS51003">
    <property type="entry name" value="CYTB_CTER"/>
    <property type="match status" value="1"/>
</dbReference>
<dbReference type="PROSITE" id="PS51002">
    <property type="entry name" value="CYTB_NTER"/>
    <property type="match status" value="1"/>
</dbReference>
<name>CYB_DICTO</name>
<geneLocation type="mitochondrion"/>
<organism>
    <name type="scientific">Dicrostonyx torquatus</name>
    <name type="common">Arctic lemming</name>
    <dbReference type="NCBI Taxonomy" id="85952"/>
    <lineage>
        <taxon>Eukaryota</taxon>
        <taxon>Metazoa</taxon>
        <taxon>Chordata</taxon>
        <taxon>Craniata</taxon>
        <taxon>Vertebrata</taxon>
        <taxon>Euteleostomi</taxon>
        <taxon>Mammalia</taxon>
        <taxon>Eutheria</taxon>
        <taxon>Euarchontoglires</taxon>
        <taxon>Glires</taxon>
        <taxon>Rodentia</taxon>
        <taxon>Myomorpha</taxon>
        <taxon>Muroidea</taxon>
        <taxon>Cricetidae</taxon>
        <taxon>Arvicolinae</taxon>
        <taxon>Dicrostonyx</taxon>
    </lineage>
</organism>
<reference key="1">
    <citation type="journal article" date="1999" name="J. Mammal. Evol.">
        <title>MtDNA evidence for repeated pulses of speciation within arvicoline and murid rodents.</title>
        <authorList>
            <person name="Conroy C.J."/>
            <person name="Cook J.A."/>
        </authorList>
    </citation>
    <scope>NUCLEOTIDE SEQUENCE [GENOMIC DNA]</scope>
</reference>
<proteinExistence type="inferred from homology"/>
<comment type="function">
    <text evidence="2">Component of the ubiquinol-cytochrome c reductase complex (complex III or cytochrome b-c1 complex) that is part of the mitochondrial respiratory chain. The b-c1 complex mediates electron transfer from ubiquinol to cytochrome c. Contributes to the generation of a proton gradient across the mitochondrial membrane that is then used for ATP synthesis.</text>
</comment>
<comment type="cofactor">
    <cofactor evidence="2">
        <name>heme b</name>
        <dbReference type="ChEBI" id="CHEBI:60344"/>
    </cofactor>
    <text evidence="2">Binds 2 heme b groups non-covalently.</text>
</comment>
<comment type="subunit">
    <text evidence="2">The cytochrome bc1 complex contains 11 subunits: 3 respiratory subunits (MT-CYB, CYC1 and UQCRFS1), 2 core proteins (UQCRC1 and UQCRC2) and 6 low-molecular weight proteins (UQCRH/QCR6, UQCRB/QCR7, UQCRQ/QCR8, UQCR10/QCR9, UQCR11/QCR10 and a cleavage product of UQCRFS1). This cytochrome bc1 complex then forms a dimer.</text>
</comment>
<comment type="subcellular location">
    <subcellularLocation>
        <location evidence="2">Mitochondrion inner membrane</location>
        <topology evidence="2">Multi-pass membrane protein</topology>
    </subcellularLocation>
</comment>
<comment type="miscellaneous">
    <text evidence="1">Heme 1 (or BL or b562) is low-potential and absorbs at about 562 nm, and heme 2 (or BH or b566) is high-potential and absorbs at about 566 nm.</text>
</comment>
<comment type="similarity">
    <text evidence="3 4">Belongs to the cytochrome b family.</text>
</comment>
<comment type="caution">
    <text evidence="2">The full-length protein contains only eight transmembrane helices, not nine as predicted by bioinformatics tools.</text>
</comment>
<sequence length="380" mass="42770">MTIIRKKHPLIKIINHSFIDLPAPSNISSWWNFGSLLGLCLIIQILTGLFLAMHYTSDTATAFSSVTHICRDVNYGWLIRYVHANGASMFFICLFLHVGRGIYYGSYNMIETWNMGIILLFAVMATAFMGYVLPWGQMSFWGATVITNLLSAIPYIGTTLVEWIWGGFSVDKATLTRFFAFHFIMPFIITALVLVHLLFLHETGSNNPSGLNSDADKIPFHPYYTIKDFLGALLLLMALMILVLFFPDILGDPDNYTPANPLNTPPHIKPGWYFLFVYAILRSIPNKLGGVLALILSILVLALMTFLHTSKQRGLTFRPITQTMYWILVSDLLILTWIGGQPVEYPFIIIGKVASIAYFTIIVILMPIAGMIENNILDLD</sequence>
<evidence type="ECO:0000250" key="1"/>
<evidence type="ECO:0000250" key="2">
    <source>
        <dbReference type="UniProtKB" id="P00157"/>
    </source>
</evidence>
<evidence type="ECO:0000255" key="3">
    <source>
        <dbReference type="PROSITE-ProRule" id="PRU00967"/>
    </source>
</evidence>
<evidence type="ECO:0000255" key="4">
    <source>
        <dbReference type="PROSITE-ProRule" id="PRU00968"/>
    </source>
</evidence>